<gene>
    <name evidence="1" type="primary">purH</name>
    <name type="ordered locus">MW0956</name>
</gene>
<protein>
    <recommendedName>
        <fullName evidence="1">Bifunctional purine biosynthesis protein PurH</fullName>
    </recommendedName>
    <domain>
        <recommendedName>
            <fullName evidence="1">Phosphoribosylaminoimidazolecarboxamide formyltransferase</fullName>
            <ecNumber evidence="1">2.1.2.3</ecNumber>
        </recommendedName>
        <alternativeName>
            <fullName evidence="1">AICAR transformylase</fullName>
        </alternativeName>
    </domain>
    <domain>
        <recommendedName>
            <fullName evidence="1">IMP cyclohydrolase</fullName>
            <ecNumber evidence="1">3.5.4.10</ecNumber>
        </recommendedName>
        <alternativeName>
            <fullName evidence="1">ATIC</fullName>
        </alternativeName>
        <alternativeName>
            <fullName evidence="1">IMP synthase</fullName>
        </alternativeName>
        <alternativeName>
            <fullName evidence="1">Inosinicase</fullName>
        </alternativeName>
    </domain>
</protein>
<dbReference type="EC" id="2.1.2.3" evidence="1"/>
<dbReference type="EC" id="3.5.4.10" evidence="1"/>
<dbReference type="EMBL" id="BA000033">
    <property type="protein sequence ID" value="BAB94821.1"/>
    <property type="status" value="ALT_INIT"/>
    <property type="molecule type" value="Genomic_DNA"/>
</dbReference>
<dbReference type="RefSeq" id="WP_000709290.1">
    <property type="nucleotide sequence ID" value="NC_003923.1"/>
</dbReference>
<dbReference type="SMR" id="Q8NX88"/>
<dbReference type="KEGG" id="sam:MW0956"/>
<dbReference type="HOGENOM" id="CLU_016316_5_2_9"/>
<dbReference type="UniPathway" id="UPA00074">
    <property type="reaction ID" value="UER00133"/>
</dbReference>
<dbReference type="UniPathway" id="UPA00074">
    <property type="reaction ID" value="UER00135"/>
</dbReference>
<dbReference type="GO" id="GO:0005829">
    <property type="term" value="C:cytosol"/>
    <property type="evidence" value="ECO:0007669"/>
    <property type="project" value="TreeGrafter"/>
</dbReference>
<dbReference type="GO" id="GO:0003937">
    <property type="term" value="F:IMP cyclohydrolase activity"/>
    <property type="evidence" value="ECO:0007669"/>
    <property type="project" value="UniProtKB-UniRule"/>
</dbReference>
<dbReference type="GO" id="GO:0004643">
    <property type="term" value="F:phosphoribosylaminoimidazolecarboxamide formyltransferase activity"/>
    <property type="evidence" value="ECO:0007669"/>
    <property type="project" value="UniProtKB-UniRule"/>
</dbReference>
<dbReference type="GO" id="GO:0006189">
    <property type="term" value="P:'de novo' IMP biosynthetic process"/>
    <property type="evidence" value="ECO:0007669"/>
    <property type="project" value="UniProtKB-UniRule"/>
</dbReference>
<dbReference type="CDD" id="cd01421">
    <property type="entry name" value="IMPCH"/>
    <property type="match status" value="1"/>
</dbReference>
<dbReference type="FunFam" id="3.40.140.20:FF:000001">
    <property type="entry name" value="Bifunctional purine biosynthesis protein PurH"/>
    <property type="match status" value="1"/>
</dbReference>
<dbReference type="FunFam" id="3.40.140.20:FF:000002">
    <property type="entry name" value="Bifunctional purine biosynthesis protein PurH"/>
    <property type="match status" value="1"/>
</dbReference>
<dbReference type="FunFam" id="3.40.50.1380:FF:000001">
    <property type="entry name" value="Bifunctional purine biosynthesis protein PurH"/>
    <property type="match status" value="1"/>
</dbReference>
<dbReference type="Gene3D" id="3.40.140.20">
    <property type="match status" value="2"/>
</dbReference>
<dbReference type="Gene3D" id="3.40.50.1380">
    <property type="entry name" value="Methylglyoxal synthase-like domain"/>
    <property type="match status" value="1"/>
</dbReference>
<dbReference type="HAMAP" id="MF_00139">
    <property type="entry name" value="PurH"/>
    <property type="match status" value="1"/>
</dbReference>
<dbReference type="InterPro" id="IPR024051">
    <property type="entry name" value="AICAR_Tfase_dup_dom_sf"/>
</dbReference>
<dbReference type="InterPro" id="IPR016193">
    <property type="entry name" value="Cytidine_deaminase-like"/>
</dbReference>
<dbReference type="InterPro" id="IPR011607">
    <property type="entry name" value="MGS-like_dom"/>
</dbReference>
<dbReference type="InterPro" id="IPR036914">
    <property type="entry name" value="MGS-like_dom_sf"/>
</dbReference>
<dbReference type="InterPro" id="IPR002695">
    <property type="entry name" value="PurH-like"/>
</dbReference>
<dbReference type="NCBIfam" id="NF002049">
    <property type="entry name" value="PRK00881.1"/>
    <property type="match status" value="1"/>
</dbReference>
<dbReference type="NCBIfam" id="TIGR00355">
    <property type="entry name" value="purH"/>
    <property type="match status" value="1"/>
</dbReference>
<dbReference type="PANTHER" id="PTHR11692:SF0">
    <property type="entry name" value="BIFUNCTIONAL PURINE BIOSYNTHESIS PROTEIN ATIC"/>
    <property type="match status" value="1"/>
</dbReference>
<dbReference type="PANTHER" id="PTHR11692">
    <property type="entry name" value="BIFUNCTIONAL PURINE BIOSYNTHESIS PROTEIN PURH"/>
    <property type="match status" value="1"/>
</dbReference>
<dbReference type="Pfam" id="PF01808">
    <property type="entry name" value="AICARFT_IMPCHas"/>
    <property type="match status" value="1"/>
</dbReference>
<dbReference type="Pfam" id="PF02142">
    <property type="entry name" value="MGS"/>
    <property type="match status" value="1"/>
</dbReference>
<dbReference type="PIRSF" id="PIRSF000414">
    <property type="entry name" value="AICARFT_IMPCHas"/>
    <property type="match status" value="1"/>
</dbReference>
<dbReference type="SMART" id="SM00798">
    <property type="entry name" value="AICARFT_IMPCHas"/>
    <property type="match status" value="1"/>
</dbReference>
<dbReference type="SMART" id="SM00851">
    <property type="entry name" value="MGS"/>
    <property type="match status" value="1"/>
</dbReference>
<dbReference type="SUPFAM" id="SSF53927">
    <property type="entry name" value="Cytidine deaminase-like"/>
    <property type="match status" value="1"/>
</dbReference>
<dbReference type="SUPFAM" id="SSF52335">
    <property type="entry name" value="Methylglyoxal synthase-like"/>
    <property type="match status" value="1"/>
</dbReference>
<dbReference type="PROSITE" id="PS51855">
    <property type="entry name" value="MGS"/>
    <property type="match status" value="1"/>
</dbReference>
<comment type="catalytic activity">
    <reaction evidence="1">
        <text>(6R)-10-formyltetrahydrofolate + 5-amino-1-(5-phospho-beta-D-ribosyl)imidazole-4-carboxamide = 5-formamido-1-(5-phospho-D-ribosyl)imidazole-4-carboxamide + (6S)-5,6,7,8-tetrahydrofolate</text>
        <dbReference type="Rhea" id="RHEA:22192"/>
        <dbReference type="ChEBI" id="CHEBI:57453"/>
        <dbReference type="ChEBI" id="CHEBI:58467"/>
        <dbReference type="ChEBI" id="CHEBI:58475"/>
        <dbReference type="ChEBI" id="CHEBI:195366"/>
        <dbReference type="EC" id="2.1.2.3"/>
    </reaction>
</comment>
<comment type="catalytic activity">
    <reaction evidence="1">
        <text>IMP + H2O = 5-formamido-1-(5-phospho-D-ribosyl)imidazole-4-carboxamide</text>
        <dbReference type="Rhea" id="RHEA:18445"/>
        <dbReference type="ChEBI" id="CHEBI:15377"/>
        <dbReference type="ChEBI" id="CHEBI:58053"/>
        <dbReference type="ChEBI" id="CHEBI:58467"/>
        <dbReference type="EC" id="3.5.4.10"/>
    </reaction>
</comment>
<comment type="pathway">
    <text evidence="1">Purine metabolism; IMP biosynthesis via de novo pathway; 5-formamido-1-(5-phospho-D-ribosyl)imidazole-4-carboxamide from 5-amino-1-(5-phospho-D-ribosyl)imidazole-4-carboxamide (10-formyl THF route): step 1/1.</text>
</comment>
<comment type="pathway">
    <text evidence="1">Purine metabolism; IMP biosynthesis via de novo pathway; IMP from 5-formamido-1-(5-phospho-D-ribosyl)imidazole-4-carboxamide: step 1/1.</text>
</comment>
<comment type="domain">
    <text evidence="1">The IMP cyclohydrolase activity resides in the N-terminal region.</text>
</comment>
<comment type="similarity">
    <text evidence="1">Belongs to the PurH family.</text>
</comment>
<comment type="sequence caution" evidence="3">
    <conflict type="erroneous initiation">
        <sequence resource="EMBL-CDS" id="BAB94821"/>
    </conflict>
</comment>
<organism>
    <name type="scientific">Staphylococcus aureus (strain MW2)</name>
    <dbReference type="NCBI Taxonomy" id="196620"/>
    <lineage>
        <taxon>Bacteria</taxon>
        <taxon>Bacillati</taxon>
        <taxon>Bacillota</taxon>
        <taxon>Bacilli</taxon>
        <taxon>Bacillales</taxon>
        <taxon>Staphylococcaceae</taxon>
        <taxon>Staphylococcus</taxon>
    </lineage>
</organism>
<accession>Q8NX88</accession>
<keyword id="KW-0378">Hydrolase</keyword>
<keyword id="KW-0511">Multifunctional enzyme</keyword>
<keyword id="KW-0658">Purine biosynthesis</keyword>
<keyword id="KW-0808">Transferase</keyword>
<evidence type="ECO:0000255" key="1">
    <source>
        <dbReference type="HAMAP-Rule" id="MF_00139"/>
    </source>
</evidence>
<evidence type="ECO:0000255" key="2">
    <source>
        <dbReference type="PROSITE-ProRule" id="PRU01202"/>
    </source>
</evidence>
<evidence type="ECO:0000305" key="3"/>
<proteinExistence type="inferred from homology"/>
<name>PUR9_STAAW</name>
<sequence>MKKAILSVSNKTGIVEFAKALTQLNYELYSTGGTKRILDEANVPVRSVSDLTHFPEIMDGRVKTLHPAVHGGILADRNKPQHLNELSEQHIDLIDMVVVNLYPFQQTVANPDVTMDEAIENIDIGGPTMLRAAAKNYKHVTTIVHPADYQEVLTRLRNDSLDESYRQSLMIKVFEHTAEYDEAIVRFFKGDKETLRYGENPQQSAYFVRTSNAKHTIAGAKQLHGKQLSYNNIKDADATLALVKKFDTPATVAVKHMNPCGVGIGDTIEQAFQHAYEADSQSIFGGIVALNRAVTPELAEQLHSIFLEVIIAPKFTDEALDILKQKKNVRLLEIDMTIDSNEEEFVSVSGGYLVQDKDNYVVPKEEMKVVTEVAPTDEQWEAMLLGWKVVPSVKSNAIILSNNKQTVGIGAGQMNRVGAAKIALERAIEINDHVALVSDGFFPMGDTVELAAQHGIKAIIQPGGSIKDQDSIDMANKHGIAMVVTGTRHFKH</sequence>
<reference key="1">
    <citation type="journal article" date="2002" name="Lancet">
        <title>Genome and virulence determinants of high virulence community-acquired MRSA.</title>
        <authorList>
            <person name="Baba T."/>
            <person name="Takeuchi F."/>
            <person name="Kuroda M."/>
            <person name="Yuzawa H."/>
            <person name="Aoki K."/>
            <person name="Oguchi A."/>
            <person name="Nagai Y."/>
            <person name="Iwama N."/>
            <person name="Asano K."/>
            <person name="Naimi T."/>
            <person name="Kuroda H."/>
            <person name="Cui L."/>
            <person name="Yamamoto K."/>
            <person name="Hiramatsu K."/>
        </authorList>
    </citation>
    <scope>NUCLEOTIDE SEQUENCE [LARGE SCALE GENOMIC DNA]</scope>
    <source>
        <strain>MW2</strain>
    </source>
</reference>
<feature type="chain" id="PRO_0000192127" description="Bifunctional purine biosynthesis protein PurH">
    <location>
        <begin position="1"/>
        <end position="492"/>
    </location>
</feature>
<feature type="domain" description="MGS-like" evidence="2">
    <location>
        <begin position="1"/>
        <end position="144"/>
    </location>
</feature>